<evidence type="ECO:0000250" key="1"/>
<evidence type="ECO:0000250" key="2">
    <source>
        <dbReference type="UniProtKB" id="P36640"/>
    </source>
</evidence>
<evidence type="ECO:0000255" key="3"/>
<evidence type="ECO:0000256" key="4">
    <source>
        <dbReference type="SAM" id="MobiDB-lite"/>
    </source>
</evidence>
<evidence type="ECO:0000269" key="5">
    <source>
    </source>
</evidence>
<evidence type="ECO:0000269" key="6">
    <source>
    </source>
</evidence>
<evidence type="ECO:0000269" key="7">
    <source>
    </source>
</evidence>
<evidence type="ECO:0000269" key="8">
    <source>
    </source>
</evidence>
<evidence type="ECO:0000269" key="9">
    <source>
    </source>
</evidence>
<evidence type="ECO:0000269" key="10">
    <source>
    </source>
</evidence>
<evidence type="ECO:0000305" key="11"/>
<feature type="chain" id="PRO_0000046185" description="Magnesium-transporting ATPase, P-type 1">
    <location>
        <begin position="1"/>
        <end position="908"/>
    </location>
</feature>
<feature type="topological domain" description="Cytoplasmic" evidence="10">
    <location>
        <begin position="1"/>
        <end position="80"/>
    </location>
</feature>
<feature type="transmembrane region" description="Helical; Name=1">
    <location>
        <begin position="81"/>
        <end position="101"/>
    </location>
</feature>
<feature type="topological domain" description="Extracellular" evidence="10">
    <location>
        <begin position="102"/>
        <end position="113"/>
    </location>
</feature>
<feature type="transmembrane region" description="Helical; Name=2">
    <location>
        <begin position="114"/>
        <end position="134"/>
    </location>
</feature>
<feature type="topological domain" description="Cytoplasmic" evidence="10">
    <location>
        <begin position="135"/>
        <end position="293"/>
    </location>
</feature>
<feature type="transmembrane region" description="Helical; Name=3">
    <location>
        <begin position="294"/>
        <end position="314"/>
    </location>
</feature>
<feature type="topological domain" description="Extracellular" evidence="10">
    <location>
        <begin position="315"/>
        <end position="323"/>
    </location>
</feature>
<feature type="transmembrane region" description="Helical; Name=4">
    <location>
        <begin position="324"/>
        <end position="341"/>
    </location>
</feature>
<feature type="topological domain" description="Cytoplasmic" evidence="10">
    <location>
        <begin position="342"/>
        <end position="704"/>
    </location>
</feature>
<feature type="transmembrane region" description="Helical; Name=5">
    <location>
        <begin position="705"/>
        <end position="724"/>
    </location>
</feature>
<feature type="topological domain" description="Extracellular" evidence="10">
    <location>
        <begin position="725"/>
        <end position="733"/>
    </location>
</feature>
<feature type="transmembrane region" description="Helical; Name=6">
    <location>
        <begin position="734"/>
        <end position="753"/>
    </location>
</feature>
<feature type="topological domain" description="Cytoplasmic" evidence="10">
    <location>
        <begin position="754"/>
        <end position="775"/>
    </location>
</feature>
<feature type="transmembrane region" description="Helical; Name=7">
    <location>
        <begin position="776"/>
        <end position="799"/>
    </location>
</feature>
<feature type="topological domain" description="Extracellular" evidence="10">
    <location>
        <begin position="800"/>
        <end position="808"/>
    </location>
</feature>
<feature type="transmembrane region" description="Helical; Name=8">
    <location>
        <begin position="809"/>
        <end position="827"/>
    </location>
</feature>
<feature type="topological domain" description="Cytoplasmic" evidence="10">
    <location>
        <begin position="828"/>
        <end position="840"/>
    </location>
</feature>
<feature type="transmembrane region" description="Helical; Name=9">
    <location>
        <begin position="841"/>
        <end position="860"/>
    </location>
</feature>
<feature type="topological domain" description="Extracellular" evidence="10">
    <location>
        <begin position="861"/>
        <end position="875"/>
    </location>
</feature>
<feature type="transmembrane region" description="Helical; Name=10">
    <location>
        <begin position="876"/>
        <end position="895"/>
    </location>
</feature>
<feature type="topological domain" description="Cytoplasmic" evidence="10">
    <location>
        <begin position="896"/>
        <end position="908"/>
    </location>
</feature>
<feature type="region of interest" description="Disordered" evidence="4">
    <location>
        <begin position="1"/>
        <end position="21"/>
    </location>
</feature>
<feature type="compositionally biased region" description="Basic and acidic residues" evidence="4">
    <location>
        <begin position="1"/>
        <end position="20"/>
    </location>
</feature>
<feature type="active site" description="4-aspartylphosphate intermediate" evidence="1">
    <location>
        <position position="379"/>
    </location>
</feature>
<feature type="binding site" evidence="3">
    <location>
        <position position="337"/>
    </location>
    <ligand>
        <name>Mg(2+)</name>
        <dbReference type="ChEBI" id="CHEBI:18420"/>
    </ligand>
</feature>
<feature type="binding site" evidence="1">
    <location>
        <position position="650"/>
    </location>
    <ligand>
        <name>Mg(2+)</name>
        <dbReference type="ChEBI" id="CHEBI:18420"/>
    </ligand>
</feature>
<feature type="binding site" evidence="1">
    <location>
        <position position="654"/>
    </location>
    <ligand>
        <name>Mg(2+)</name>
        <dbReference type="ChEBI" id="CHEBI:18420"/>
    </ligand>
</feature>
<feature type="binding site" evidence="3">
    <location>
        <position position="718"/>
    </location>
    <ligand>
        <name>Mg(2+)</name>
        <dbReference type="ChEBI" id="CHEBI:18420"/>
    </ligand>
</feature>
<feature type="binding site" evidence="3">
    <location>
        <position position="743"/>
    </location>
    <ligand>
        <name>Mg(2+)</name>
        <dbReference type="ChEBI" id="CHEBI:18420"/>
    </ligand>
</feature>
<feature type="binding site" evidence="3">
    <location>
        <position position="747"/>
    </location>
    <ligand>
        <name>Mg(2+)</name>
        <dbReference type="ChEBI" id="CHEBI:18420"/>
    </ligand>
</feature>
<feature type="sequence conflict" description="In Ref. 1; AAA72084." evidence="11" ref="1">
    <original>G</original>
    <variation>V</variation>
    <location>
        <position position="717"/>
    </location>
</feature>
<proteinExistence type="evidence at protein level"/>
<organism>
    <name type="scientific">Salmonella typhimurium (strain LT2 / SGSC1412 / ATCC 700720)</name>
    <dbReference type="NCBI Taxonomy" id="99287"/>
    <lineage>
        <taxon>Bacteria</taxon>
        <taxon>Pseudomonadati</taxon>
        <taxon>Pseudomonadota</taxon>
        <taxon>Gammaproteobacteria</taxon>
        <taxon>Enterobacterales</taxon>
        <taxon>Enterobacteriaceae</taxon>
        <taxon>Salmonella</taxon>
    </lineage>
</organism>
<reference key="1">
    <citation type="journal article" date="1991" name="J. Biol. Chem.">
        <title>The mgtB Mg2+ transport locus of Salmonella typhimurium encodes a P-type ATPase.</title>
        <authorList>
            <person name="Snavely M.D."/>
            <person name="Miller C.G."/>
            <person name="Maguire M.E."/>
        </authorList>
    </citation>
    <scope>NUCLEOTIDE SEQUENCE [GENOMIC DNA]</scope>
    <scope>DISRUPTION PHENOTYPE</scope>
    <scope>PROBABLE OPERON STRUCTURE</scope>
</reference>
<reference key="2">
    <citation type="journal article" date="2001" name="Nature">
        <title>Complete genome sequence of Salmonella enterica serovar Typhimurium LT2.</title>
        <authorList>
            <person name="McClelland M."/>
            <person name="Sanderson K.E."/>
            <person name="Spieth J."/>
            <person name="Clifton S.W."/>
            <person name="Latreille P."/>
            <person name="Courtney L."/>
            <person name="Porwollik S."/>
            <person name="Ali J."/>
            <person name="Dante M."/>
            <person name="Du F."/>
            <person name="Hou S."/>
            <person name="Layman D."/>
            <person name="Leonard S."/>
            <person name="Nguyen C."/>
            <person name="Scott K."/>
            <person name="Holmes A."/>
            <person name="Grewal N."/>
            <person name="Mulvaney E."/>
            <person name="Ryan E."/>
            <person name="Sun H."/>
            <person name="Florea L."/>
            <person name="Miller W."/>
            <person name="Stoneking T."/>
            <person name="Nhan M."/>
            <person name="Waterston R."/>
            <person name="Wilson R.K."/>
        </authorList>
    </citation>
    <scope>NUCLEOTIDE SEQUENCE [LARGE SCALE GENOMIC DNA]</scope>
    <source>
        <strain>LT2 / SGSC1412 / ATCC 700720</strain>
    </source>
</reference>
<reference key="3">
    <citation type="journal article" date="1989" name="J. Bacteriol.">
        <title>Magnesium transport in Salmonella typhimurium: genetic characterization and cloning of three magnesium transport loci.</title>
        <authorList>
            <person name="Hmiel S.P."/>
            <person name="Snavely M.D."/>
            <person name="Florer J.B."/>
            <person name="Maguire M.E."/>
            <person name="Miller C.G."/>
        </authorList>
    </citation>
    <scope>FUNCTION</scope>
</reference>
<reference key="4">
    <citation type="journal article" date="1989" name="J. Bacteriol.">
        <title>Magnesium transport in Salmonella typhimurium: expression of cloned genes for three distinct Mg2+ transport systems.</title>
        <authorList>
            <person name="Snavely M.D."/>
            <person name="Florer J.B."/>
            <person name="Miller C.G."/>
            <person name="Maguire M.E."/>
        </authorList>
    </citation>
    <scope>SUBCELLULAR LOCATION</scope>
</reference>
<reference key="5">
    <citation type="journal article" date="1989" name="J. Bacteriol.">
        <title>Magnesium transport in Salmonella typhimurium: (28)Mg2+ transport by the CorA, MgtA, and MgtB systems.</title>
        <authorList>
            <person name="Snavely M.D."/>
            <person name="Florer J.B."/>
            <person name="Miller C.G."/>
            <person name="Maguire M.E."/>
        </authorList>
    </citation>
    <scope>FUNCTION</scope>
    <scope>BIOPHYSICOCHEMICAL PROPERTIES</scope>
</reference>
<reference key="6">
    <citation type="journal article" date="1995" name="J. Bacteriol.">
        <title>Magnesium transport in Salmonella typhimurium: mgtA encodes a P-type ATPase and is regulated by Mg2+ in a manner similar to that of the mgtB P-type ATPase.</title>
        <authorList>
            <person name="Tao T."/>
            <person name="Snavely M.D."/>
            <person name="Farr S.G."/>
            <person name="Maguire M.E."/>
        </authorList>
    </citation>
    <scope>INDUCTION</scope>
    <scope>OPERON STRUCTURE</scope>
    <source>
        <strain>LT2</strain>
    </source>
</reference>
<reference key="7">
    <citation type="journal article" date="1993" name="J. Biol. Chem.">
        <title>Membrane topology of a P-type ATPase. The MgtB magnesium transport protein of Salmonella typhimurium.</title>
        <authorList>
            <person name="Smith D.L."/>
            <person name="Tao T."/>
            <person name="Maguire M.E."/>
        </authorList>
    </citation>
    <scope>TOPOLOGY</scope>
    <scope>SUBCELLULAR LOCATION</scope>
    <source>
        <strain>LT2</strain>
    </source>
</reference>
<dbReference type="EC" id="7.2.2.14" evidence="2"/>
<dbReference type="EMBL" id="M57715">
    <property type="protein sequence ID" value="AAA72084.1"/>
    <property type="molecule type" value="Unassigned_DNA"/>
</dbReference>
<dbReference type="EMBL" id="AE006468">
    <property type="protein sequence ID" value="AAL22621.1"/>
    <property type="molecule type" value="Genomic_DNA"/>
</dbReference>
<dbReference type="RefSeq" id="NP_462662.1">
    <property type="nucleotide sequence ID" value="NC_003197.2"/>
</dbReference>
<dbReference type="SMR" id="P22036"/>
<dbReference type="STRING" id="99287.STM3763"/>
<dbReference type="PaxDb" id="99287-STM3763"/>
<dbReference type="GeneID" id="1255287"/>
<dbReference type="KEGG" id="stm:STM3763"/>
<dbReference type="PATRIC" id="fig|99287.12.peg.3981"/>
<dbReference type="HOGENOM" id="CLU_002360_6_3_6"/>
<dbReference type="OMA" id="QQPPIFN"/>
<dbReference type="PhylomeDB" id="P22036"/>
<dbReference type="BioCyc" id="SENT99287:STM3763-MONOMER"/>
<dbReference type="Proteomes" id="UP000001014">
    <property type="component" value="Chromosome"/>
</dbReference>
<dbReference type="GO" id="GO:0043231">
    <property type="term" value="C:intracellular membrane-bounded organelle"/>
    <property type="evidence" value="ECO:0000318"/>
    <property type="project" value="GO_Central"/>
</dbReference>
<dbReference type="GO" id="GO:0005886">
    <property type="term" value="C:plasma membrane"/>
    <property type="evidence" value="ECO:0000318"/>
    <property type="project" value="GO_Central"/>
</dbReference>
<dbReference type="GO" id="GO:0005524">
    <property type="term" value="F:ATP binding"/>
    <property type="evidence" value="ECO:0007669"/>
    <property type="project" value="UniProtKB-KW"/>
</dbReference>
<dbReference type="GO" id="GO:0016887">
    <property type="term" value="F:ATP hydrolysis activity"/>
    <property type="evidence" value="ECO:0007669"/>
    <property type="project" value="InterPro"/>
</dbReference>
<dbReference type="GO" id="GO:0019829">
    <property type="term" value="F:ATPase-coupled monoatomic cation transmembrane transporter activity"/>
    <property type="evidence" value="ECO:0000318"/>
    <property type="project" value="GO_Central"/>
</dbReference>
<dbReference type="GO" id="GO:0046872">
    <property type="term" value="F:metal ion binding"/>
    <property type="evidence" value="ECO:0007669"/>
    <property type="project" value="UniProtKB-KW"/>
</dbReference>
<dbReference type="GO" id="GO:0015444">
    <property type="term" value="F:P-type magnesium transporter activity"/>
    <property type="evidence" value="ECO:0007669"/>
    <property type="project" value="UniProtKB-EC"/>
</dbReference>
<dbReference type="CDD" id="cd02077">
    <property type="entry name" value="P-type_ATPase_Mg"/>
    <property type="match status" value="1"/>
</dbReference>
<dbReference type="Gene3D" id="3.40.1110.10">
    <property type="entry name" value="Calcium-transporting ATPase, cytoplasmic domain N"/>
    <property type="match status" value="1"/>
</dbReference>
<dbReference type="Gene3D" id="2.70.150.10">
    <property type="entry name" value="Calcium-transporting ATPase, cytoplasmic transduction domain A"/>
    <property type="match status" value="1"/>
</dbReference>
<dbReference type="Gene3D" id="1.20.1110.10">
    <property type="entry name" value="Calcium-transporting ATPase, transmembrane domain"/>
    <property type="match status" value="1"/>
</dbReference>
<dbReference type="Gene3D" id="3.40.50.1000">
    <property type="entry name" value="HAD superfamily/HAD-like"/>
    <property type="match status" value="1"/>
</dbReference>
<dbReference type="InterPro" id="IPR006068">
    <property type="entry name" value="ATPase_P-typ_cation-transptr_C"/>
</dbReference>
<dbReference type="InterPro" id="IPR004014">
    <property type="entry name" value="ATPase_P-typ_cation-transptr_N"/>
</dbReference>
<dbReference type="InterPro" id="IPR023299">
    <property type="entry name" value="ATPase_P-typ_cyto_dom_N"/>
</dbReference>
<dbReference type="InterPro" id="IPR018303">
    <property type="entry name" value="ATPase_P-typ_P_site"/>
</dbReference>
<dbReference type="InterPro" id="IPR023298">
    <property type="entry name" value="ATPase_P-typ_TM_dom_sf"/>
</dbReference>
<dbReference type="InterPro" id="IPR008250">
    <property type="entry name" value="ATPase_P-typ_transduc_dom_A_sf"/>
</dbReference>
<dbReference type="InterPro" id="IPR036412">
    <property type="entry name" value="HAD-like_sf"/>
</dbReference>
<dbReference type="InterPro" id="IPR023214">
    <property type="entry name" value="HAD_sf"/>
</dbReference>
<dbReference type="InterPro" id="IPR006415">
    <property type="entry name" value="P-type_ATPase_IIIB"/>
</dbReference>
<dbReference type="InterPro" id="IPR001757">
    <property type="entry name" value="P_typ_ATPase"/>
</dbReference>
<dbReference type="InterPro" id="IPR044492">
    <property type="entry name" value="P_typ_ATPase_HD_dom"/>
</dbReference>
<dbReference type="NCBIfam" id="TIGR01524">
    <property type="entry name" value="ATPase-IIIB_Mg"/>
    <property type="match status" value="1"/>
</dbReference>
<dbReference type="NCBIfam" id="TIGR01494">
    <property type="entry name" value="ATPase_P-type"/>
    <property type="match status" value="2"/>
</dbReference>
<dbReference type="NCBIfam" id="NF011702">
    <property type="entry name" value="PRK15122.1"/>
    <property type="match status" value="1"/>
</dbReference>
<dbReference type="PANTHER" id="PTHR42861">
    <property type="entry name" value="CALCIUM-TRANSPORTING ATPASE"/>
    <property type="match status" value="1"/>
</dbReference>
<dbReference type="Pfam" id="PF00689">
    <property type="entry name" value="Cation_ATPase_C"/>
    <property type="match status" value="1"/>
</dbReference>
<dbReference type="Pfam" id="PF00690">
    <property type="entry name" value="Cation_ATPase_N"/>
    <property type="match status" value="1"/>
</dbReference>
<dbReference type="Pfam" id="PF00122">
    <property type="entry name" value="E1-E2_ATPase"/>
    <property type="match status" value="1"/>
</dbReference>
<dbReference type="Pfam" id="PF00702">
    <property type="entry name" value="Hydrolase"/>
    <property type="match status" value="1"/>
</dbReference>
<dbReference type="PRINTS" id="PR01836">
    <property type="entry name" value="MGATPASE"/>
</dbReference>
<dbReference type="SFLD" id="SFLDG00002">
    <property type="entry name" value="C1.7:_P-type_atpase_like"/>
    <property type="match status" value="1"/>
</dbReference>
<dbReference type="SFLD" id="SFLDF00027">
    <property type="entry name" value="p-type_atpase"/>
    <property type="match status" value="1"/>
</dbReference>
<dbReference type="SMART" id="SM00831">
    <property type="entry name" value="Cation_ATPase_N"/>
    <property type="match status" value="1"/>
</dbReference>
<dbReference type="SUPFAM" id="SSF81653">
    <property type="entry name" value="Calcium ATPase, transduction domain A"/>
    <property type="match status" value="1"/>
</dbReference>
<dbReference type="SUPFAM" id="SSF81665">
    <property type="entry name" value="Calcium ATPase, transmembrane domain M"/>
    <property type="match status" value="1"/>
</dbReference>
<dbReference type="SUPFAM" id="SSF56784">
    <property type="entry name" value="HAD-like"/>
    <property type="match status" value="1"/>
</dbReference>
<dbReference type="PROSITE" id="PS00154">
    <property type="entry name" value="ATPASE_E1_E2"/>
    <property type="match status" value="1"/>
</dbReference>
<accession>P22036</accession>
<comment type="function">
    <text evidence="6 8">Mediates magnesium influx to the cytosol.</text>
</comment>
<comment type="catalytic activity">
    <reaction evidence="2">
        <text>Mg(2+)(out) + ATP + H2O = Mg(2+)(in) + ADP + phosphate + H(+)</text>
        <dbReference type="Rhea" id="RHEA:10260"/>
        <dbReference type="ChEBI" id="CHEBI:15377"/>
        <dbReference type="ChEBI" id="CHEBI:15378"/>
        <dbReference type="ChEBI" id="CHEBI:18420"/>
        <dbReference type="ChEBI" id="CHEBI:30616"/>
        <dbReference type="ChEBI" id="CHEBI:43474"/>
        <dbReference type="ChEBI" id="CHEBI:456216"/>
        <dbReference type="EC" id="7.2.2.14"/>
    </reaction>
</comment>
<comment type="biophysicochemical properties">
    <kinetics>
        <KM evidence="8">6 uM for magnesium ions (at 37 degrees Celsius)</KM>
    </kinetics>
</comment>
<comment type="subcellular location">
    <subcellularLocation>
        <location evidence="7 10">Cell inner membrane</location>
        <topology evidence="10">Multi-pass membrane protein</topology>
    </subcellularLocation>
</comment>
<comment type="induction">
    <text evidence="9">Part of the mgtC/mgtB operon. Induced by low extracellular levels of Mg(2+).</text>
</comment>
<comment type="disruption phenotype">
    <text evidence="5">Decreases Mg(2+) influx.</text>
</comment>
<comment type="similarity">
    <text evidence="11">Belongs to the cation transport ATPase (P-type) (TC 3.A.3) family. Type IIIB subfamily.</text>
</comment>
<sequence length="908" mass="100387">MTDMNIENRKLNRPASENDKQHKKVFPIEAEAFHSPEETLARLNSHRQGLTIEEASERLKVYGRNEVAHEQVPPALIQLLQAFNNPFIYVLMALAGVSFITDYWLPLRRGEETDLTGVLIILTMVSLSGLLRFWQEFRTNRAAQALKKMVRTTATVLRRGPGNIGAVQEEIPIEELVPGDVVFLAAGDLVPADVRLLASRDLFISQSILSGESLPVEKYDVMADVAGKDSEQLPDKDKSLLDLGNICLMGTNVTSGRAQAVVVATGSRTWFGSLAKSIVGTRTQTAFDRGVNSVSWLLIRFMLIMVPVVLLINGFSKGDWVEASLFALAVAVGLTPEMLPMIVSSNLAKGAIAMSRRKVIVKRLNAIQNFGAMDVLCTDKTGTLTQDNIFLEHHLDVSGVKSSRVLMLAWLNSSSQSGARNVMDRAILRFGEGRIAPSTKARFIKRDELPFDFVRRRVSVLVEDAQHGDRCLICKGAVEEMMMVATHLREGDRVVALTETRRELLLAKTEDYNAQGFRVLLIATRKLDGSGNNPTLSVEDETELTIEGMLTFLDPPKESAGKAIAALRDNGVAVKVLTGDNPVVTARICLEVGIDTHDILTGTQVEAMSDAELASEVEKRAVFARLTPLQKTRILQALQKNGHTVGFLGDGINDAPALRDADVGISVDSAADIAKESSDIILLEKDLMVLEEGVIKGRETFGNIIKYLNMTASSNFGNVFSVLVASAFIPFLPMLAIHLLIQNLMYDISQLSLPWDKMDKEFLRKPRKWDAKNIGRFMLWIGPTSSIFDITTFALMWYVFAANNVEAQALFQSGWFIEGLLSQTLVVHMLRTQKIPFIQSRATLPVLLTTGLIMAIGIYIPFSPLGAMVGLEPLPLSYFPWLVATLLSYCLVAQGMKRFYIKRFGQWF</sequence>
<gene>
    <name type="primary">mgtB</name>
    <name type="ordered locus">STM3763</name>
</gene>
<name>ATMB_SALTY</name>
<protein>
    <recommendedName>
        <fullName>Magnesium-transporting ATPase, P-type 1</fullName>
        <ecNumber evidence="2">7.2.2.14</ecNumber>
    </recommendedName>
    <alternativeName>
        <fullName>Mg(2+) transport ATPase, P-type 1</fullName>
    </alternativeName>
</protein>
<keyword id="KW-0067">ATP-binding</keyword>
<keyword id="KW-0997">Cell inner membrane</keyword>
<keyword id="KW-1003">Cell membrane</keyword>
<keyword id="KW-0460">Magnesium</keyword>
<keyword id="KW-0472">Membrane</keyword>
<keyword id="KW-0479">Metal-binding</keyword>
<keyword id="KW-0547">Nucleotide-binding</keyword>
<keyword id="KW-0597">Phosphoprotein</keyword>
<keyword id="KW-1185">Reference proteome</keyword>
<keyword id="KW-1278">Translocase</keyword>
<keyword id="KW-0812">Transmembrane</keyword>
<keyword id="KW-1133">Transmembrane helix</keyword>
<keyword id="KW-0813">Transport</keyword>